<keyword id="KW-0002">3D-structure</keyword>
<keyword id="KW-0012">Acyltransferase</keyword>
<keyword id="KW-1185">Reference proteome</keyword>
<keyword id="KW-0808">Transferase</keyword>
<evidence type="ECO:0000250" key="1"/>
<evidence type="ECO:0000305" key="2"/>
<evidence type="ECO:0007829" key="3">
    <source>
        <dbReference type="PDB" id="2QIK"/>
    </source>
</evidence>
<organism>
    <name type="scientific">Bacillus subtilis (strain 168)</name>
    <dbReference type="NCBI Taxonomy" id="224308"/>
    <lineage>
        <taxon>Bacteria</taxon>
        <taxon>Bacillati</taxon>
        <taxon>Bacillota</taxon>
        <taxon>Bacilli</taxon>
        <taxon>Bacillales</taxon>
        <taxon>Bacillaceae</taxon>
        <taxon>Bacillus</taxon>
    </lineage>
</organism>
<accession>P39759</accession>
<feature type="chain" id="PRO_0000184788" description="Putative gamma-glutamylcyclotransferase YkqA">
    <location>
        <begin position="1"/>
        <end position="277"/>
    </location>
</feature>
<feature type="active site" description="Proton acceptor" evidence="1">
    <location>
        <position position="205"/>
    </location>
</feature>
<feature type="binding site" evidence="1">
    <location>
        <begin position="8"/>
        <end position="11"/>
    </location>
    <ligand>
        <name>substrate</name>
    </ligand>
</feature>
<feature type="strand" evidence="3">
    <location>
        <begin position="3"/>
        <end position="7"/>
    </location>
</feature>
<feature type="helix" evidence="3">
    <location>
        <begin position="18"/>
        <end position="21"/>
    </location>
</feature>
<feature type="strand" evidence="3">
    <location>
        <begin position="25"/>
        <end position="39"/>
    </location>
</feature>
<feature type="strand" evidence="3">
    <location>
        <begin position="44"/>
        <end position="47"/>
    </location>
</feature>
<feature type="strand" evidence="3">
    <location>
        <begin position="54"/>
        <end position="63"/>
    </location>
</feature>
<feature type="helix" evidence="3">
    <location>
        <begin position="65"/>
        <end position="74"/>
    </location>
</feature>
<feature type="strand" evidence="3">
    <location>
        <begin position="79"/>
        <end position="87"/>
    </location>
</feature>
<feature type="strand" evidence="3">
    <location>
        <begin position="90"/>
        <end position="98"/>
    </location>
</feature>
<feature type="strand" evidence="3">
    <location>
        <begin position="108"/>
        <end position="110"/>
    </location>
</feature>
<feature type="helix" evidence="3">
    <location>
        <begin position="115"/>
        <end position="122"/>
    </location>
</feature>
<feature type="strand" evidence="3">
    <location>
        <begin position="126"/>
        <end position="132"/>
    </location>
</feature>
<feature type="helix" evidence="3">
    <location>
        <begin position="135"/>
        <end position="137"/>
    </location>
</feature>
<feature type="helix" evidence="3">
    <location>
        <begin position="140"/>
        <end position="144"/>
    </location>
</feature>
<feature type="helix" evidence="3">
    <location>
        <begin position="148"/>
        <end position="150"/>
    </location>
</feature>
<feature type="strand" evidence="3">
    <location>
        <begin position="154"/>
        <end position="161"/>
    </location>
</feature>
<feature type="strand" evidence="3">
    <location>
        <begin position="164"/>
        <end position="171"/>
    </location>
</feature>
<feature type="strand" evidence="3">
    <location>
        <begin position="174"/>
        <end position="180"/>
    </location>
</feature>
<feature type="strand" evidence="3">
    <location>
        <begin position="185"/>
        <end position="193"/>
    </location>
</feature>
<feature type="helix" evidence="3">
    <location>
        <begin position="195"/>
        <end position="197"/>
    </location>
</feature>
<feature type="helix" evidence="3">
    <location>
        <begin position="198"/>
        <end position="204"/>
    </location>
</feature>
<feature type="turn" evidence="3">
    <location>
        <begin position="205"/>
        <end position="210"/>
    </location>
</feature>
<feature type="strand" evidence="3">
    <location>
        <begin position="211"/>
        <end position="221"/>
    </location>
</feature>
<feature type="strand" evidence="3">
    <location>
        <begin position="224"/>
        <end position="236"/>
    </location>
</feature>
<feature type="helix" evidence="3">
    <location>
        <begin position="245"/>
        <end position="258"/>
    </location>
</feature>
<feature type="helix" evidence="3">
    <location>
        <begin position="261"/>
        <end position="273"/>
    </location>
</feature>
<sequence>MNSLLFVYGTLRKHEKNHHLLAQSACINEQARTKGSLFAAKEGPTVVFNDEDEGYIYGEVYEADELCIHKLDQFFQGYHKQTVFVETDVGIKIALIYFMNKDGCAGFTKISSGDWKEHQMISKSKNPIYYFAYGSCMDNARFQKAGVDHYFQDPVGRAVLKGYTTRFTLKREDGSRADMLEDGGTTEGVLYRIPYSALSYLYKREGVESLTYRPAFVDVEAGGRHYKDCLTFLVLQKEAEIAPPQHYQIEIERGAELYLSPEFTEKLKRHMNSLPKG</sequence>
<proteinExistence type="evidence at protein level"/>
<gene>
    <name type="primary">ykqA</name>
    <name type="synonym">ylxU</name>
    <name type="synonym">yzaB</name>
    <name type="ordered locus">BSU14500</name>
</gene>
<protein>
    <recommendedName>
        <fullName>Putative gamma-glutamylcyclotransferase YkqA</fullName>
        <ecNumber>2.3.2.-</ecNumber>
    </recommendedName>
</protein>
<reference key="1">
    <citation type="submission" date="1994-07" db="EMBL/GenBank/DDBJ databases">
        <title>The nucleotide sequence analysis of kinC region.</title>
        <authorList>
            <person name="Kobayashi K."/>
            <person name="Sato T."/>
            <person name="Kobayashi Y."/>
        </authorList>
    </citation>
    <scope>NUCLEOTIDE SEQUENCE [GENOMIC DNA]</scope>
    <source>
        <strain>168 / JH642</strain>
    </source>
</reference>
<reference key="2">
    <citation type="journal article" date="1995" name="J. Bacteriol.">
        <title>Isolation and characterization of kinC, a gene that encodes a sensor kinase homologous to the sporulation sensor kinases KinA and KinB in Bacillus subtilis.</title>
        <authorList>
            <person name="Ledeaux J.R."/>
            <person name="Grossman A.D."/>
        </authorList>
    </citation>
    <scope>NUCLEOTIDE SEQUENCE [GENOMIC DNA]</scope>
</reference>
<reference key="3">
    <citation type="journal article" date="1996" name="Microbiology">
        <title>The ampS-nprE (124 degrees-127 degrees) region of the Bacillus subtilis 168 chromosome: sequencing of a 27 kb segment and identification of several genes in the area.</title>
        <authorList>
            <person name="Winters P."/>
            <person name="Caldwell R.M."/>
            <person name="Enfield L."/>
            <person name="Ferrari E."/>
        </authorList>
    </citation>
    <scope>NUCLEOTIDE SEQUENCE [GENOMIC DNA]</scope>
    <source>
        <strain>168</strain>
    </source>
</reference>
<reference key="4">
    <citation type="journal article" date="1997" name="Nature">
        <title>The complete genome sequence of the Gram-positive bacterium Bacillus subtilis.</title>
        <authorList>
            <person name="Kunst F."/>
            <person name="Ogasawara N."/>
            <person name="Moszer I."/>
            <person name="Albertini A.M."/>
            <person name="Alloni G."/>
            <person name="Azevedo V."/>
            <person name="Bertero M.G."/>
            <person name="Bessieres P."/>
            <person name="Bolotin A."/>
            <person name="Borchert S."/>
            <person name="Borriss R."/>
            <person name="Boursier L."/>
            <person name="Brans A."/>
            <person name="Braun M."/>
            <person name="Brignell S.C."/>
            <person name="Bron S."/>
            <person name="Brouillet S."/>
            <person name="Bruschi C.V."/>
            <person name="Caldwell B."/>
            <person name="Capuano V."/>
            <person name="Carter N.M."/>
            <person name="Choi S.-K."/>
            <person name="Codani J.-J."/>
            <person name="Connerton I.F."/>
            <person name="Cummings N.J."/>
            <person name="Daniel R.A."/>
            <person name="Denizot F."/>
            <person name="Devine K.M."/>
            <person name="Duesterhoeft A."/>
            <person name="Ehrlich S.D."/>
            <person name="Emmerson P.T."/>
            <person name="Entian K.-D."/>
            <person name="Errington J."/>
            <person name="Fabret C."/>
            <person name="Ferrari E."/>
            <person name="Foulger D."/>
            <person name="Fritz C."/>
            <person name="Fujita M."/>
            <person name="Fujita Y."/>
            <person name="Fuma S."/>
            <person name="Galizzi A."/>
            <person name="Galleron N."/>
            <person name="Ghim S.-Y."/>
            <person name="Glaser P."/>
            <person name="Goffeau A."/>
            <person name="Golightly E.J."/>
            <person name="Grandi G."/>
            <person name="Guiseppi G."/>
            <person name="Guy B.J."/>
            <person name="Haga K."/>
            <person name="Haiech J."/>
            <person name="Harwood C.R."/>
            <person name="Henaut A."/>
            <person name="Hilbert H."/>
            <person name="Holsappel S."/>
            <person name="Hosono S."/>
            <person name="Hullo M.-F."/>
            <person name="Itaya M."/>
            <person name="Jones L.-M."/>
            <person name="Joris B."/>
            <person name="Karamata D."/>
            <person name="Kasahara Y."/>
            <person name="Klaerr-Blanchard M."/>
            <person name="Klein C."/>
            <person name="Kobayashi Y."/>
            <person name="Koetter P."/>
            <person name="Koningstein G."/>
            <person name="Krogh S."/>
            <person name="Kumano M."/>
            <person name="Kurita K."/>
            <person name="Lapidus A."/>
            <person name="Lardinois S."/>
            <person name="Lauber J."/>
            <person name="Lazarevic V."/>
            <person name="Lee S.-M."/>
            <person name="Levine A."/>
            <person name="Liu H."/>
            <person name="Masuda S."/>
            <person name="Mauel C."/>
            <person name="Medigue C."/>
            <person name="Medina N."/>
            <person name="Mellado R.P."/>
            <person name="Mizuno M."/>
            <person name="Moestl D."/>
            <person name="Nakai S."/>
            <person name="Noback M."/>
            <person name="Noone D."/>
            <person name="O'Reilly M."/>
            <person name="Ogawa K."/>
            <person name="Ogiwara A."/>
            <person name="Oudega B."/>
            <person name="Park S.-H."/>
            <person name="Parro V."/>
            <person name="Pohl T.M."/>
            <person name="Portetelle D."/>
            <person name="Porwollik S."/>
            <person name="Prescott A.M."/>
            <person name="Presecan E."/>
            <person name="Pujic P."/>
            <person name="Purnelle B."/>
            <person name="Rapoport G."/>
            <person name="Rey M."/>
            <person name="Reynolds S."/>
            <person name="Rieger M."/>
            <person name="Rivolta C."/>
            <person name="Rocha E."/>
            <person name="Roche B."/>
            <person name="Rose M."/>
            <person name="Sadaie Y."/>
            <person name="Sato T."/>
            <person name="Scanlan E."/>
            <person name="Schleich S."/>
            <person name="Schroeter R."/>
            <person name="Scoffone F."/>
            <person name="Sekiguchi J."/>
            <person name="Sekowska A."/>
            <person name="Seror S.J."/>
            <person name="Serror P."/>
            <person name="Shin B.-S."/>
            <person name="Soldo B."/>
            <person name="Sorokin A."/>
            <person name="Tacconi E."/>
            <person name="Takagi T."/>
            <person name="Takahashi H."/>
            <person name="Takemaru K."/>
            <person name="Takeuchi M."/>
            <person name="Tamakoshi A."/>
            <person name="Tanaka T."/>
            <person name="Terpstra P."/>
            <person name="Tognoni A."/>
            <person name="Tosato V."/>
            <person name="Uchiyama S."/>
            <person name="Vandenbol M."/>
            <person name="Vannier F."/>
            <person name="Vassarotti A."/>
            <person name="Viari A."/>
            <person name="Wambutt R."/>
            <person name="Wedler E."/>
            <person name="Wedler H."/>
            <person name="Weitzenegger T."/>
            <person name="Winters P."/>
            <person name="Wipat A."/>
            <person name="Yamamoto H."/>
            <person name="Yamane K."/>
            <person name="Yasumoto K."/>
            <person name="Yata K."/>
            <person name="Yoshida K."/>
            <person name="Yoshikawa H.-F."/>
            <person name="Zumstein E."/>
            <person name="Yoshikawa H."/>
            <person name="Danchin A."/>
        </authorList>
    </citation>
    <scope>NUCLEOTIDE SEQUENCE [LARGE SCALE GENOMIC DNA]</scope>
    <source>
        <strain>168</strain>
    </source>
</reference>
<reference key="5">
    <citation type="submission" date="2009-02" db="PDB data bank">
        <title>Crystal structure of YkqA from Bacillus subtilis.</title>
        <authorList>
            <consortium name="Northeast structural genomics consortium (NESG)"/>
        </authorList>
    </citation>
    <scope>X-RAY CRYSTALLOGRAPHY (1.35 ANGSTROMS)</scope>
</reference>
<dbReference type="EC" id="2.3.2.-"/>
<dbReference type="EMBL" id="D37799">
    <property type="protein sequence ID" value="BAA07050.1"/>
    <property type="molecule type" value="Genomic_DNA"/>
</dbReference>
<dbReference type="EMBL" id="L34803">
    <property type="protein sequence ID" value="AAA66184.1"/>
    <property type="molecule type" value="Genomic_DNA"/>
</dbReference>
<dbReference type="EMBL" id="AF012285">
    <property type="protein sequence ID" value="AAC24925.1"/>
    <property type="molecule type" value="Genomic_DNA"/>
</dbReference>
<dbReference type="EMBL" id="AL009126">
    <property type="protein sequence ID" value="CAB13323.1"/>
    <property type="molecule type" value="Genomic_DNA"/>
</dbReference>
<dbReference type="PIR" id="I39872">
    <property type="entry name" value="I39872"/>
</dbReference>
<dbReference type="RefSeq" id="NP_389333.1">
    <property type="nucleotide sequence ID" value="NC_000964.3"/>
</dbReference>
<dbReference type="RefSeq" id="WP_003245146.1">
    <property type="nucleotide sequence ID" value="NZ_OZ025638.1"/>
</dbReference>
<dbReference type="PDB" id="2QIK">
    <property type="method" value="X-ray"/>
    <property type="resolution" value="1.35 A"/>
    <property type="chains" value="A=1-277"/>
</dbReference>
<dbReference type="PDBsum" id="2QIK"/>
<dbReference type="SMR" id="P39759"/>
<dbReference type="FunCoup" id="P39759">
    <property type="interactions" value="22"/>
</dbReference>
<dbReference type="STRING" id="224308.BSU14500"/>
<dbReference type="PaxDb" id="224308-BSU14500"/>
<dbReference type="EnsemblBacteria" id="CAB13323">
    <property type="protein sequence ID" value="CAB13323"/>
    <property type="gene ID" value="BSU_14500"/>
</dbReference>
<dbReference type="GeneID" id="939408"/>
<dbReference type="KEGG" id="bsu:BSU14500"/>
<dbReference type="PATRIC" id="fig|224308.179.peg.1580"/>
<dbReference type="eggNOG" id="COG2105">
    <property type="taxonomic scope" value="Bacteria"/>
</dbReference>
<dbReference type="eggNOG" id="COG3703">
    <property type="taxonomic scope" value="Bacteria"/>
</dbReference>
<dbReference type="InParanoid" id="P39759"/>
<dbReference type="OrthoDB" id="8538589at2"/>
<dbReference type="BioCyc" id="BSUB:BSU14500-MONOMER"/>
<dbReference type="EvolutionaryTrace" id="P39759"/>
<dbReference type="Proteomes" id="UP000001570">
    <property type="component" value="Chromosome"/>
</dbReference>
<dbReference type="GO" id="GO:0005829">
    <property type="term" value="C:cytosol"/>
    <property type="evidence" value="ECO:0000318"/>
    <property type="project" value="GO_Central"/>
</dbReference>
<dbReference type="GO" id="GO:0016746">
    <property type="term" value="F:acyltransferase activity"/>
    <property type="evidence" value="ECO:0007669"/>
    <property type="project" value="UniProtKB-KW"/>
</dbReference>
<dbReference type="GO" id="GO:0061929">
    <property type="term" value="F:gamma-glutamylaminecyclotransferase activity"/>
    <property type="evidence" value="ECO:0007669"/>
    <property type="project" value="InterPro"/>
</dbReference>
<dbReference type="CDD" id="cd06661">
    <property type="entry name" value="GGCT_like"/>
    <property type="match status" value="2"/>
</dbReference>
<dbReference type="FunFam" id="3.10.490.10:FF:000024">
    <property type="entry name" value="Putative gamma-glutamylcyclotransferase YkqA"/>
    <property type="match status" value="1"/>
</dbReference>
<dbReference type="Gene3D" id="3.10.490.10">
    <property type="entry name" value="Gamma-glutamyl cyclotransferase-like"/>
    <property type="match status" value="2"/>
</dbReference>
<dbReference type="InterPro" id="IPR009288">
    <property type="entry name" value="AIG2-like_dom"/>
</dbReference>
<dbReference type="InterPro" id="IPR039126">
    <property type="entry name" value="GGACT"/>
</dbReference>
<dbReference type="InterPro" id="IPR013024">
    <property type="entry name" value="GGCT-like"/>
</dbReference>
<dbReference type="InterPro" id="IPR036568">
    <property type="entry name" value="GGCT-like_sf"/>
</dbReference>
<dbReference type="PANTHER" id="PTHR12510:SF4">
    <property type="entry name" value="GAMMA-GLUTAMYLAMINECYCLOTRANSFERASE"/>
    <property type="match status" value="1"/>
</dbReference>
<dbReference type="PANTHER" id="PTHR12510">
    <property type="entry name" value="TROPONIN C-AKIN-1 PROTEIN"/>
    <property type="match status" value="1"/>
</dbReference>
<dbReference type="Pfam" id="PF13772">
    <property type="entry name" value="AIG2_2"/>
    <property type="match status" value="1"/>
</dbReference>
<dbReference type="Pfam" id="PF06094">
    <property type="entry name" value="GGACT"/>
    <property type="match status" value="1"/>
</dbReference>
<dbReference type="SUPFAM" id="SSF110857">
    <property type="entry name" value="Gamma-glutamyl cyclotransferase-like"/>
    <property type="match status" value="2"/>
</dbReference>
<name>YKQA_BACSU</name>
<comment type="function">
    <text evidence="1">Putative gamma-glutamylcyclotransferase.</text>
</comment>
<comment type="similarity">
    <text evidence="2">Belongs to the gamma-glutamylcyclotransferase family.</text>
</comment>